<protein>
    <recommendedName>
        <fullName>Prolactin-6A1</fullName>
    </recommendedName>
    <alternativeName>
        <fullName>Placental prolactin-like protein B</fullName>
        <shortName>PLP-B</shortName>
        <shortName>PRL-like protein B</shortName>
    </alternativeName>
</protein>
<evidence type="ECO:0000250" key="1"/>
<evidence type="ECO:0000255" key="2"/>
<evidence type="ECO:0000305" key="3"/>
<organism>
    <name type="scientific">Rattus norvegicus</name>
    <name type="common">Rat</name>
    <dbReference type="NCBI Taxonomy" id="10116"/>
    <lineage>
        <taxon>Eukaryota</taxon>
        <taxon>Metazoa</taxon>
        <taxon>Chordata</taxon>
        <taxon>Craniata</taxon>
        <taxon>Vertebrata</taxon>
        <taxon>Euteleostomi</taxon>
        <taxon>Mammalia</taxon>
        <taxon>Eutheria</taxon>
        <taxon>Euarchontoglires</taxon>
        <taxon>Glires</taxon>
        <taxon>Rodentia</taxon>
        <taxon>Myomorpha</taxon>
        <taxon>Muroidea</taxon>
        <taxon>Muridae</taxon>
        <taxon>Murinae</taxon>
        <taxon>Rattus</taxon>
    </lineage>
</organism>
<comment type="subcellular location">
    <subcellularLocation>
        <location>Secreted</location>
    </subcellularLocation>
</comment>
<comment type="similarity">
    <text evidence="3">Belongs to the somatotropin/prolactin family.</text>
</comment>
<comment type="sequence caution" evidence="3">
    <conflict type="erroneous initiation">
        <sequence resource="EMBL-CDS" id="AAA41895"/>
    </conflict>
</comment>
<accession>P24800</accession>
<accession>Q63439</accession>
<dbReference type="EMBL" id="M31155">
    <property type="protein sequence ID" value="AAA41891.1"/>
    <property type="molecule type" value="mRNA"/>
</dbReference>
<dbReference type="EMBL" id="M31156">
    <property type="protein sequence ID" value="AAA41894.1"/>
    <property type="molecule type" value="Genomic_DNA"/>
</dbReference>
<dbReference type="EMBL" id="M31156">
    <property type="protein sequence ID" value="AAA41895.1"/>
    <property type="status" value="ALT_INIT"/>
    <property type="molecule type" value="Genomic_DNA"/>
</dbReference>
<dbReference type="PIR" id="A40919">
    <property type="entry name" value="A40919"/>
</dbReference>
<dbReference type="SMR" id="P24800"/>
<dbReference type="STRING" id="10116.ENSRNOP00000022944"/>
<dbReference type="GlyCosmos" id="P24800">
    <property type="glycosylation" value="1 site, No reported glycans"/>
</dbReference>
<dbReference type="GlyGen" id="P24800">
    <property type="glycosylation" value="1 site"/>
</dbReference>
<dbReference type="PaxDb" id="10116-ENSRNOP00000022944"/>
<dbReference type="UCSC" id="RGD:3405">
    <property type="organism name" value="rat"/>
</dbReference>
<dbReference type="AGR" id="RGD:3405"/>
<dbReference type="RGD" id="3405">
    <property type="gene designation" value="Prl6a1"/>
</dbReference>
<dbReference type="eggNOG" id="ENOG502QYU3">
    <property type="taxonomic scope" value="Eukaryota"/>
</dbReference>
<dbReference type="InParanoid" id="P24800"/>
<dbReference type="OrthoDB" id="9580234at2759"/>
<dbReference type="PhylomeDB" id="P24800"/>
<dbReference type="PRO" id="PR:P24800"/>
<dbReference type="Proteomes" id="UP000002494">
    <property type="component" value="Unplaced"/>
</dbReference>
<dbReference type="GO" id="GO:0005615">
    <property type="term" value="C:extracellular space"/>
    <property type="evidence" value="ECO:0000318"/>
    <property type="project" value="GO_Central"/>
</dbReference>
<dbReference type="GO" id="GO:0005179">
    <property type="term" value="F:hormone activity"/>
    <property type="evidence" value="ECO:0000318"/>
    <property type="project" value="GO_Central"/>
</dbReference>
<dbReference type="GO" id="GO:0005148">
    <property type="term" value="F:prolactin receptor binding"/>
    <property type="evidence" value="ECO:0000318"/>
    <property type="project" value="GO_Central"/>
</dbReference>
<dbReference type="GO" id="GO:0007166">
    <property type="term" value="P:cell surface receptor signaling pathway"/>
    <property type="evidence" value="ECO:0000318"/>
    <property type="project" value="GO_Central"/>
</dbReference>
<dbReference type="GO" id="GO:0007565">
    <property type="term" value="P:female pregnancy"/>
    <property type="evidence" value="ECO:0000318"/>
    <property type="project" value="GO_Central"/>
</dbReference>
<dbReference type="GO" id="GO:0030879">
    <property type="term" value="P:mammary gland development"/>
    <property type="evidence" value="ECO:0000318"/>
    <property type="project" value="GO_Central"/>
</dbReference>
<dbReference type="GO" id="GO:1903489">
    <property type="term" value="P:positive regulation of lactation"/>
    <property type="evidence" value="ECO:0000318"/>
    <property type="project" value="GO_Central"/>
</dbReference>
<dbReference type="GO" id="GO:0046427">
    <property type="term" value="P:positive regulation of receptor signaling pathway via JAK-STAT"/>
    <property type="evidence" value="ECO:0000318"/>
    <property type="project" value="GO_Central"/>
</dbReference>
<dbReference type="GO" id="GO:0031667">
    <property type="term" value="P:response to nutrient levels"/>
    <property type="evidence" value="ECO:0000318"/>
    <property type="project" value="GO_Central"/>
</dbReference>
<dbReference type="CDD" id="cd10288">
    <property type="entry name" value="prolactin_like"/>
    <property type="match status" value="1"/>
</dbReference>
<dbReference type="Gene3D" id="1.20.1250.10">
    <property type="match status" value="1"/>
</dbReference>
<dbReference type="InterPro" id="IPR009079">
    <property type="entry name" value="4_helix_cytokine-like_core"/>
</dbReference>
<dbReference type="InterPro" id="IPR001400">
    <property type="entry name" value="Somatotropin/Prolactin"/>
</dbReference>
<dbReference type="PANTHER" id="PTHR11417:SF10">
    <property type="entry name" value="PROLACTIN-6A1"/>
    <property type="match status" value="1"/>
</dbReference>
<dbReference type="PANTHER" id="PTHR11417">
    <property type="entry name" value="SOMATOTROPIN,PROLACTIN"/>
    <property type="match status" value="1"/>
</dbReference>
<dbReference type="Pfam" id="PF00103">
    <property type="entry name" value="Hormone_1"/>
    <property type="match status" value="1"/>
</dbReference>
<dbReference type="SUPFAM" id="SSF47266">
    <property type="entry name" value="4-helical cytokines"/>
    <property type="match status" value="1"/>
</dbReference>
<keyword id="KW-1015">Disulfide bond</keyword>
<keyword id="KW-0325">Glycoprotein</keyword>
<keyword id="KW-0372">Hormone</keyword>
<keyword id="KW-1185">Reference proteome</keyword>
<keyword id="KW-0964">Secreted</keyword>
<keyword id="KW-0732">Signal</keyword>
<proteinExistence type="evidence at transcript level"/>
<reference key="1">
    <citation type="journal article" date="1988" name="Mol. Endocrinol.">
        <title>A third prolactin-like protein expressed by the developing rat placenta: complementary deoxyribonucleic acid sequence and partial structure of the gene.</title>
        <authorList>
            <person name="Duckworth M.L."/>
            <person name="Peden L.M."/>
            <person name="Friesen H.G."/>
        </authorList>
    </citation>
    <scope>NUCLEOTIDE SEQUENCE [GENOMIC DNA / MRNA]</scope>
</reference>
<name>PR6A1_RAT</name>
<feature type="signal peptide" evidence="2">
    <location>
        <begin position="1"/>
        <end position="33"/>
    </location>
</feature>
<feature type="chain" id="PRO_0000032954" description="Prolactin-6A1">
    <location>
        <begin position="34"/>
        <end position="234"/>
    </location>
</feature>
<feature type="glycosylation site" description="N-linked (GlcNAc...) asparagine" evidence="2">
    <location>
        <position position="61"/>
    </location>
</feature>
<feature type="disulfide bond" evidence="1">
    <location>
        <begin position="93"/>
        <end position="209"/>
    </location>
</feature>
<feature type="disulfide bond" evidence="1">
    <location>
        <begin position="226"/>
        <end position="234"/>
    </location>
</feature>
<feature type="sequence conflict" description="In Ref. 1; AAA41895." evidence="3" ref="1">
    <original>G</original>
    <variation>V</variation>
    <location>
        <position position="112"/>
    </location>
</feature>
<gene>
    <name type="primary">Prl6a1</name>
    <name type="synonym">Prlpb</name>
</gene>
<sequence>MVKSWLRMSKKMEAGTLLMLLMSNILLWENVASVPRHASGAGRGEMSLHGLLDHAIILAHNVTELIAEMNSVFLEDVLYKPGRWFPERDLTACHRSPFTIAVSKEGTQQRLGVFLVKEMIGMLETWTFSLYHIANEMSHMEEPPDEIISRAKNIEEKIKELMDVLKGILNKIQPGSPQNERFPMWNELAYLRSPDEERRHFAFTNLFQCLLQDSRKFDSKVRLLKCRLIYNRDC</sequence>